<dbReference type="EC" id="5.4.2.10" evidence="1"/>
<dbReference type="EMBL" id="AP008226">
    <property type="protein sequence ID" value="BAD70879.1"/>
    <property type="molecule type" value="Genomic_DNA"/>
</dbReference>
<dbReference type="RefSeq" id="WP_011228407.1">
    <property type="nucleotide sequence ID" value="NC_006461.1"/>
</dbReference>
<dbReference type="RefSeq" id="YP_144322.1">
    <property type="nucleotide sequence ID" value="NC_006461.1"/>
</dbReference>
<dbReference type="SMR" id="Q5SMH2"/>
<dbReference type="EnsemblBacteria" id="BAD70879">
    <property type="protein sequence ID" value="BAD70879"/>
    <property type="gene ID" value="BAD70879"/>
</dbReference>
<dbReference type="GeneID" id="3168789"/>
<dbReference type="KEGG" id="ttj:TTHA1056"/>
<dbReference type="PATRIC" id="fig|300852.9.peg.1036"/>
<dbReference type="eggNOG" id="COG1109">
    <property type="taxonomic scope" value="Bacteria"/>
</dbReference>
<dbReference type="HOGENOM" id="CLU_016950_7_0_0"/>
<dbReference type="PhylomeDB" id="Q5SMH2"/>
<dbReference type="Proteomes" id="UP000000532">
    <property type="component" value="Chromosome"/>
</dbReference>
<dbReference type="GO" id="GO:0005829">
    <property type="term" value="C:cytosol"/>
    <property type="evidence" value="ECO:0007669"/>
    <property type="project" value="TreeGrafter"/>
</dbReference>
<dbReference type="GO" id="GO:0000287">
    <property type="term" value="F:magnesium ion binding"/>
    <property type="evidence" value="ECO:0007669"/>
    <property type="project" value="UniProtKB-UniRule"/>
</dbReference>
<dbReference type="GO" id="GO:0008966">
    <property type="term" value="F:phosphoglucosamine mutase activity"/>
    <property type="evidence" value="ECO:0007669"/>
    <property type="project" value="UniProtKB-UniRule"/>
</dbReference>
<dbReference type="GO" id="GO:0004615">
    <property type="term" value="F:phosphomannomutase activity"/>
    <property type="evidence" value="ECO:0007669"/>
    <property type="project" value="TreeGrafter"/>
</dbReference>
<dbReference type="GO" id="GO:0005975">
    <property type="term" value="P:carbohydrate metabolic process"/>
    <property type="evidence" value="ECO:0007669"/>
    <property type="project" value="InterPro"/>
</dbReference>
<dbReference type="GO" id="GO:0009252">
    <property type="term" value="P:peptidoglycan biosynthetic process"/>
    <property type="evidence" value="ECO:0007669"/>
    <property type="project" value="TreeGrafter"/>
</dbReference>
<dbReference type="GO" id="GO:0006048">
    <property type="term" value="P:UDP-N-acetylglucosamine biosynthetic process"/>
    <property type="evidence" value="ECO:0007669"/>
    <property type="project" value="TreeGrafter"/>
</dbReference>
<dbReference type="CDD" id="cd05802">
    <property type="entry name" value="GlmM"/>
    <property type="match status" value="1"/>
</dbReference>
<dbReference type="FunFam" id="3.30.310.50:FF:000001">
    <property type="entry name" value="Phosphoglucosamine mutase"/>
    <property type="match status" value="1"/>
</dbReference>
<dbReference type="FunFam" id="3.40.120.10:FF:000001">
    <property type="entry name" value="Phosphoglucosamine mutase"/>
    <property type="match status" value="1"/>
</dbReference>
<dbReference type="FunFam" id="3.40.120.10:FF:000002">
    <property type="entry name" value="Phosphoglucosamine mutase"/>
    <property type="match status" value="1"/>
</dbReference>
<dbReference type="Gene3D" id="3.40.120.10">
    <property type="entry name" value="Alpha-D-Glucose-1,6-Bisphosphate, subunit A, domain 3"/>
    <property type="match status" value="3"/>
</dbReference>
<dbReference type="Gene3D" id="3.30.310.50">
    <property type="entry name" value="Alpha-D-phosphohexomutase, C-terminal domain"/>
    <property type="match status" value="1"/>
</dbReference>
<dbReference type="HAMAP" id="MF_01554_B">
    <property type="entry name" value="GlmM_B"/>
    <property type="match status" value="1"/>
</dbReference>
<dbReference type="InterPro" id="IPR005844">
    <property type="entry name" value="A-D-PHexomutase_a/b/a-I"/>
</dbReference>
<dbReference type="InterPro" id="IPR016055">
    <property type="entry name" value="A-D-PHexomutase_a/b/a-I/II/III"/>
</dbReference>
<dbReference type="InterPro" id="IPR005845">
    <property type="entry name" value="A-D-PHexomutase_a/b/a-II"/>
</dbReference>
<dbReference type="InterPro" id="IPR005846">
    <property type="entry name" value="A-D-PHexomutase_a/b/a-III"/>
</dbReference>
<dbReference type="InterPro" id="IPR005843">
    <property type="entry name" value="A-D-PHexomutase_C"/>
</dbReference>
<dbReference type="InterPro" id="IPR036900">
    <property type="entry name" value="A-D-PHexomutase_C_sf"/>
</dbReference>
<dbReference type="InterPro" id="IPR005841">
    <property type="entry name" value="Alpha-D-phosphohexomutase_SF"/>
</dbReference>
<dbReference type="InterPro" id="IPR006352">
    <property type="entry name" value="GlmM_bact"/>
</dbReference>
<dbReference type="InterPro" id="IPR050060">
    <property type="entry name" value="Phosphoglucosamine_mutase"/>
</dbReference>
<dbReference type="NCBIfam" id="TIGR01455">
    <property type="entry name" value="glmM"/>
    <property type="match status" value="1"/>
</dbReference>
<dbReference type="NCBIfam" id="NF008139">
    <property type="entry name" value="PRK10887.1"/>
    <property type="match status" value="1"/>
</dbReference>
<dbReference type="PANTHER" id="PTHR42946:SF1">
    <property type="entry name" value="PHOSPHOGLUCOMUTASE (ALPHA-D-GLUCOSE-1,6-BISPHOSPHATE-DEPENDENT)"/>
    <property type="match status" value="1"/>
</dbReference>
<dbReference type="PANTHER" id="PTHR42946">
    <property type="entry name" value="PHOSPHOHEXOSE MUTASE"/>
    <property type="match status" value="1"/>
</dbReference>
<dbReference type="Pfam" id="PF02878">
    <property type="entry name" value="PGM_PMM_I"/>
    <property type="match status" value="1"/>
</dbReference>
<dbReference type="Pfam" id="PF02879">
    <property type="entry name" value="PGM_PMM_II"/>
    <property type="match status" value="1"/>
</dbReference>
<dbReference type="Pfam" id="PF02880">
    <property type="entry name" value="PGM_PMM_III"/>
    <property type="match status" value="1"/>
</dbReference>
<dbReference type="Pfam" id="PF00408">
    <property type="entry name" value="PGM_PMM_IV"/>
    <property type="match status" value="1"/>
</dbReference>
<dbReference type="PRINTS" id="PR00509">
    <property type="entry name" value="PGMPMM"/>
</dbReference>
<dbReference type="SUPFAM" id="SSF55957">
    <property type="entry name" value="Phosphoglucomutase, C-terminal domain"/>
    <property type="match status" value="1"/>
</dbReference>
<dbReference type="SUPFAM" id="SSF53738">
    <property type="entry name" value="Phosphoglucomutase, first 3 domains"/>
    <property type="match status" value="3"/>
</dbReference>
<evidence type="ECO:0000255" key="1">
    <source>
        <dbReference type="HAMAP-Rule" id="MF_01554"/>
    </source>
</evidence>
<feature type="chain" id="PRO_0000147993" description="Phosphoglucosamine mutase">
    <location>
        <begin position="1"/>
        <end position="437"/>
    </location>
</feature>
<feature type="active site" description="Phosphoserine intermediate" evidence="1">
    <location>
        <position position="101"/>
    </location>
</feature>
<feature type="binding site" description="via phosphate group" evidence="1">
    <location>
        <position position="101"/>
    </location>
    <ligand>
        <name>Mg(2+)</name>
        <dbReference type="ChEBI" id="CHEBI:18420"/>
    </ligand>
</feature>
<feature type="binding site" evidence="1">
    <location>
        <position position="234"/>
    </location>
    <ligand>
        <name>Mg(2+)</name>
        <dbReference type="ChEBI" id="CHEBI:18420"/>
    </ligand>
</feature>
<feature type="binding site" evidence="1">
    <location>
        <position position="236"/>
    </location>
    <ligand>
        <name>Mg(2+)</name>
        <dbReference type="ChEBI" id="CHEBI:18420"/>
    </ligand>
</feature>
<feature type="binding site" evidence="1">
    <location>
        <position position="238"/>
    </location>
    <ligand>
        <name>Mg(2+)</name>
        <dbReference type="ChEBI" id="CHEBI:18420"/>
    </ligand>
</feature>
<feature type="modified residue" description="Phosphoserine" evidence="1">
    <location>
        <position position="101"/>
    </location>
</feature>
<organism>
    <name type="scientific">Thermus thermophilus (strain ATCC 27634 / DSM 579 / HB8)</name>
    <dbReference type="NCBI Taxonomy" id="300852"/>
    <lineage>
        <taxon>Bacteria</taxon>
        <taxon>Thermotogati</taxon>
        <taxon>Deinococcota</taxon>
        <taxon>Deinococci</taxon>
        <taxon>Thermales</taxon>
        <taxon>Thermaceae</taxon>
        <taxon>Thermus</taxon>
    </lineage>
</organism>
<keyword id="KW-0413">Isomerase</keyword>
<keyword id="KW-0460">Magnesium</keyword>
<keyword id="KW-0479">Metal-binding</keyword>
<keyword id="KW-0597">Phosphoprotein</keyword>
<keyword id="KW-1185">Reference proteome</keyword>
<sequence length="437" mass="46969">MRRYFGTDGVRGEAGKPPLTPEFVLKLGQAAGAYFLAQEKRPVVLLAKDTRESSDLLEAALAAGLMSQGVRVEHLGVLPTPGVAHLTKALKATAGAVISASHNPYQDNGIKFFGPTGEKLPDGAEEEIERLLLEDHPTRGIGTVGDFREAERMYLDFLLAHAPDLTGLKVGLDLAHGATYRIGPKLFQKAGAEVMAFFNTPDGRNINRGCGSTHPEALSRFVVELGLDLGIAFDGDGDRVQFIDRKGRLFHGDHVLYLAALAFGEKGVVGTVMSNMALEVALKERGLAFHRAAVGDRYVLEKLKETGLALGGEPSGHVIFLRHHTTGDGLLTALLTLKALKALGGDLADWYEALPLYPQVLLNVRVSDKAKVMADPRLGEAVREAEARLGGRGRVNVRPSGTEPVVRVMVEAEEGAEEVARELAERVRALSQEAQAV</sequence>
<proteinExistence type="inferred from homology"/>
<reference key="1">
    <citation type="submission" date="2004-11" db="EMBL/GenBank/DDBJ databases">
        <title>Complete genome sequence of Thermus thermophilus HB8.</title>
        <authorList>
            <person name="Masui R."/>
            <person name="Kurokawa K."/>
            <person name="Nakagawa N."/>
            <person name="Tokunaga F."/>
            <person name="Koyama Y."/>
            <person name="Shibata T."/>
            <person name="Oshima T."/>
            <person name="Yokoyama S."/>
            <person name="Yasunaga T."/>
            <person name="Kuramitsu S."/>
        </authorList>
    </citation>
    <scope>NUCLEOTIDE SEQUENCE [LARGE SCALE GENOMIC DNA]</scope>
    <source>
        <strain>ATCC 27634 / DSM 579 / HB8</strain>
    </source>
</reference>
<comment type="function">
    <text evidence="1">Catalyzes the conversion of glucosamine-6-phosphate to glucosamine-1-phosphate.</text>
</comment>
<comment type="catalytic activity">
    <reaction evidence="1">
        <text>alpha-D-glucosamine 1-phosphate = D-glucosamine 6-phosphate</text>
        <dbReference type="Rhea" id="RHEA:23424"/>
        <dbReference type="ChEBI" id="CHEBI:58516"/>
        <dbReference type="ChEBI" id="CHEBI:58725"/>
        <dbReference type="EC" id="5.4.2.10"/>
    </reaction>
</comment>
<comment type="cofactor">
    <cofactor evidence="1">
        <name>Mg(2+)</name>
        <dbReference type="ChEBI" id="CHEBI:18420"/>
    </cofactor>
    <text evidence="1">Binds 1 Mg(2+) ion per subunit.</text>
</comment>
<comment type="PTM">
    <text evidence="1">Activated by phosphorylation.</text>
</comment>
<comment type="similarity">
    <text evidence="1">Belongs to the phosphohexose mutase family.</text>
</comment>
<name>GLMM_THET8</name>
<accession>Q5SMH2</accession>
<gene>
    <name evidence="1" type="primary">glmM</name>
    <name type="ordered locus">TTHA1056</name>
</gene>
<protein>
    <recommendedName>
        <fullName evidence="1">Phosphoglucosamine mutase</fullName>
        <ecNumber evidence="1">5.4.2.10</ecNumber>
    </recommendedName>
</protein>